<sequence>MLVVISPAKRLDWAERDVATTEPAFQDDAVRLAKTARNLTLGDLKKLMGLSDDLARLNRDRFREFADAPGADVTRPAALAFAGDTYQGLEAASLDSEEMDWAQQHLRILSGLYGVLRPLDAIQAYRLEMGSRLKTRRGTSLYDYWGDQLSRTLNAQADEIGTDVLVNCASQEYFGAVDPKALKLRVITPVFMEDKGGAPKIVSFFAKKARGAMARYIVQRRLTDPQALSEFDSGGYQYNADLSAPDKPVFLRPYQG</sequence>
<accession>Q5LWQ9</accession>
<comment type="similarity">
    <text evidence="1">Belongs to the UPF0246 family.</text>
</comment>
<dbReference type="EMBL" id="CP000031">
    <property type="protein sequence ID" value="AAV93437.1"/>
    <property type="molecule type" value="Genomic_DNA"/>
</dbReference>
<dbReference type="RefSeq" id="WP_011045879.1">
    <property type="nucleotide sequence ID" value="NC_003911.12"/>
</dbReference>
<dbReference type="SMR" id="Q5LWQ9"/>
<dbReference type="STRING" id="246200.SPO0106"/>
<dbReference type="PaxDb" id="246200-SPO0106"/>
<dbReference type="KEGG" id="sil:SPO0106"/>
<dbReference type="eggNOG" id="COG3022">
    <property type="taxonomic scope" value="Bacteria"/>
</dbReference>
<dbReference type="HOGENOM" id="CLU_061989_0_0_5"/>
<dbReference type="OrthoDB" id="9777133at2"/>
<dbReference type="Proteomes" id="UP000001023">
    <property type="component" value="Chromosome"/>
</dbReference>
<dbReference type="GO" id="GO:0005829">
    <property type="term" value="C:cytosol"/>
    <property type="evidence" value="ECO:0007669"/>
    <property type="project" value="TreeGrafter"/>
</dbReference>
<dbReference type="GO" id="GO:0033194">
    <property type="term" value="P:response to hydroperoxide"/>
    <property type="evidence" value="ECO:0007669"/>
    <property type="project" value="TreeGrafter"/>
</dbReference>
<dbReference type="HAMAP" id="MF_00652">
    <property type="entry name" value="UPF0246"/>
    <property type="match status" value="1"/>
</dbReference>
<dbReference type="InterPro" id="IPR005583">
    <property type="entry name" value="YaaA"/>
</dbReference>
<dbReference type="NCBIfam" id="NF002542">
    <property type="entry name" value="PRK02101.1-3"/>
    <property type="match status" value="1"/>
</dbReference>
<dbReference type="PANTHER" id="PTHR30283:SF4">
    <property type="entry name" value="PEROXIDE STRESS RESISTANCE PROTEIN YAAA"/>
    <property type="match status" value="1"/>
</dbReference>
<dbReference type="PANTHER" id="PTHR30283">
    <property type="entry name" value="PEROXIDE STRESS RESPONSE PROTEIN YAAA"/>
    <property type="match status" value="1"/>
</dbReference>
<dbReference type="Pfam" id="PF03883">
    <property type="entry name" value="H2O2_YaaD"/>
    <property type="match status" value="1"/>
</dbReference>
<gene>
    <name type="ordered locus">SPO0106</name>
</gene>
<name>Y106_RUEPO</name>
<feature type="chain" id="PRO_0000262063" description="UPF0246 protein SPO0106">
    <location>
        <begin position="1"/>
        <end position="256"/>
    </location>
</feature>
<proteinExistence type="inferred from homology"/>
<reference key="1">
    <citation type="journal article" date="2004" name="Nature">
        <title>Genome sequence of Silicibacter pomeroyi reveals adaptations to the marine environment.</title>
        <authorList>
            <person name="Moran M.A."/>
            <person name="Buchan A."/>
            <person name="Gonzalez J.M."/>
            <person name="Heidelberg J.F."/>
            <person name="Whitman W.B."/>
            <person name="Kiene R.P."/>
            <person name="Henriksen J.R."/>
            <person name="King G.M."/>
            <person name="Belas R."/>
            <person name="Fuqua C."/>
            <person name="Brinkac L.M."/>
            <person name="Lewis M."/>
            <person name="Johri S."/>
            <person name="Weaver B."/>
            <person name="Pai G."/>
            <person name="Eisen J.A."/>
            <person name="Rahe E."/>
            <person name="Sheldon W.M."/>
            <person name="Ye W."/>
            <person name="Miller T.R."/>
            <person name="Carlton J."/>
            <person name="Rasko D.A."/>
            <person name="Paulsen I.T."/>
            <person name="Ren Q."/>
            <person name="Daugherty S.C."/>
            <person name="DeBoy R.T."/>
            <person name="Dodson R.J."/>
            <person name="Durkin A.S."/>
            <person name="Madupu R."/>
            <person name="Nelson W.C."/>
            <person name="Sullivan S.A."/>
            <person name="Rosovitz M.J."/>
            <person name="Haft D.H."/>
            <person name="Selengut J."/>
            <person name="Ward N."/>
        </authorList>
    </citation>
    <scope>NUCLEOTIDE SEQUENCE [LARGE SCALE GENOMIC DNA]</scope>
    <source>
        <strain>ATCC 700808 / DSM 15171 / DSS-3</strain>
    </source>
</reference>
<reference key="2">
    <citation type="journal article" date="2014" name="Stand. Genomic Sci.">
        <title>An updated genome annotation for the model marine bacterium Ruegeria pomeroyi DSS-3.</title>
        <authorList>
            <person name="Rivers A.R."/>
            <person name="Smith C.B."/>
            <person name="Moran M.A."/>
        </authorList>
    </citation>
    <scope>GENOME REANNOTATION</scope>
    <source>
        <strain>ATCC 700808 / DSM 15171 / DSS-3</strain>
    </source>
</reference>
<organism>
    <name type="scientific">Ruegeria pomeroyi (strain ATCC 700808 / DSM 15171 / DSS-3)</name>
    <name type="common">Silicibacter pomeroyi</name>
    <dbReference type="NCBI Taxonomy" id="246200"/>
    <lineage>
        <taxon>Bacteria</taxon>
        <taxon>Pseudomonadati</taxon>
        <taxon>Pseudomonadota</taxon>
        <taxon>Alphaproteobacteria</taxon>
        <taxon>Rhodobacterales</taxon>
        <taxon>Roseobacteraceae</taxon>
        <taxon>Ruegeria</taxon>
    </lineage>
</organism>
<keyword id="KW-1185">Reference proteome</keyword>
<protein>
    <recommendedName>
        <fullName evidence="1">UPF0246 protein SPO0106</fullName>
    </recommendedName>
</protein>
<evidence type="ECO:0000255" key="1">
    <source>
        <dbReference type="HAMAP-Rule" id="MF_00652"/>
    </source>
</evidence>